<evidence type="ECO:0000250" key="1"/>
<evidence type="ECO:0000269" key="2">
    <source>
    </source>
</evidence>
<evidence type="ECO:0000269" key="3">
    <source>
    </source>
</evidence>
<evidence type="ECO:0000305" key="4"/>
<dbReference type="EMBL" id="M61754">
    <property type="status" value="NOT_ANNOTATED_CDS"/>
    <property type="molecule type" value="mRNA"/>
</dbReference>
<dbReference type="EMBL" id="X76482">
    <property type="protein sequence ID" value="CAA54020.1"/>
    <property type="molecule type" value="Genomic_DNA"/>
</dbReference>
<dbReference type="PIR" id="JT0573">
    <property type="entry name" value="JT0573"/>
</dbReference>
<dbReference type="RefSeq" id="NP_001106760.1">
    <property type="nucleotide sequence ID" value="NM_001113289.1"/>
</dbReference>
<dbReference type="SMR" id="P24052"/>
<dbReference type="FunCoup" id="P24052">
    <property type="interactions" value="379"/>
</dbReference>
<dbReference type="STRING" id="9031.ENSGALP00000060817"/>
<dbReference type="PaxDb" id="9031-ENSGALP00000013607"/>
<dbReference type="GeneID" id="423196"/>
<dbReference type="KEGG" id="gga:423196"/>
<dbReference type="CTD" id="4192"/>
<dbReference type="VEuPathDB" id="HostDB:geneid_423196"/>
<dbReference type="eggNOG" id="ENOG502S022">
    <property type="taxonomic scope" value="Eukaryota"/>
</dbReference>
<dbReference type="InParanoid" id="P24052"/>
<dbReference type="OrthoDB" id="8818336at2759"/>
<dbReference type="PhylomeDB" id="P24052"/>
<dbReference type="PRO" id="PR:P24052"/>
<dbReference type="Proteomes" id="UP000000539">
    <property type="component" value="Unassembled WGS sequence"/>
</dbReference>
<dbReference type="GO" id="GO:0005604">
    <property type="term" value="C:basement membrane"/>
    <property type="evidence" value="ECO:0007669"/>
    <property type="project" value="UniProtKB-SubCell"/>
</dbReference>
<dbReference type="GO" id="GO:0009986">
    <property type="term" value="C:cell surface"/>
    <property type="evidence" value="ECO:0007669"/>
    <property type="project" value="UniProtKB-SubCell"/>
</dbReference>
<dbReference type="GO" id="GO:0005576">
    <property type="term" value="C:extracellular region"/>
    <property type="evidence" value="ECO:0007669"/>
    <property type="project" value="UniProtKB-KW"/>
</dbReference>
<dbReference type="GO" id="GO:0008083">
    <property type="term" value="F:growth factor activity"/>
    <property type="evidence" value="ECO:0000318"/>
    <property type="project" value="GO_Central"/>
</dbReference>
<dbReference type="GO" id="GO:0008201">
    <property type="term" value="F:heparin binding"/>
    <property type="evidence" value="ECO:0007669"/>
    <property type="project" value="UniProtKB-KW"/>
</dbReference>
<dbReference type="GO" id="GO:0030154">
    <property type="term" value="P:cell differentiation"/>
    <property type="evidence" value="ECO:0007669"/>
    <property type="project" value="UniProtKB-KW"/>
</dbReference>
<dbReference type="GO" id="GO:0051781">
    <property type="term" value="P:positive regulation of cell division"/>
    <property type="evidence" value="ECO:0007669"/>
    <property type="project" value="UniProtKB-KW"/>
</dbReference>
<dbReference type="FunFam" id="2.20.60.10:FF:000002">
    <property type="entry name" value="Midkine a"/>
    <property type="match status" value="1"/>
</dbReference>
<dbReference type="FunFam" id="2.30.90.10:FF:000001">
    <property type="entry name" value="Pleiotrophin"/>
    <property type="match status" value="1"/>
</dbReference>
<dbReference type="Gene3D" id="2.30.90.10">
    <property type="entry name" value="Heparin-binding Growth Factor, Midkine, Chain A- C-terminal Domain"/>
    <property type="match status" value="1"/>
</dbReference>
<dbReference type="Gene3D" id="2.20.60.10">
    <property type="entry name" value="Pleiotrophin/Midkine, N-terminal domain"/>
    <property type="match status" value="1"/>
</dbReference>
<dbReference type="InterPro" id="IPR000762">
    <property type="entry name" value="Midkine_heparin-bd_GF"/>
</dbReference>
<dbReference type="InterPro" id="IPR020090">
    <property type="entry name" value="PTN/MK_C_dom"/>
</dbReference>
<dbReference type="InterPro" id="IPR038130">
    <property type="entry name" value="PTN/MK_C_dom_sf"/>
</dbReference>
<dbReference type="InterPro" id="IPR020091">
    <property type="entry name" value="PTN/MK_diS_sf"/>
</dbReference>
<dbReference type="InterPro" id="IPR020089">
    <property type="entry name" value="PTN/MK_N_dom"/>
</dbReference>
<dbReference type="InterPro" id="IPR037122">
    <property type="entry name" value="PTN/MK_N_dom_sf"/>
</dbReference>
<dbReference type="InterPro" id="IPR020092">
    <property type="entry name" value="PTN_MK_heparin-bd_GF_CS"/>
</dbReference>
<dbReference type="PANTHER" id="PTHR13850:SF2">
    <property type="entry name" value="MIDKINE"/>
    <property type="match status" value="1"/>
</dbReference>
<dbReference type="PANTHER" id="PTHR13850">
    <property type="entry name" value="PLEIOTROPHIN FAMILY MEMBER"/>
    <property type="match status" value="1"/>
</dbReference>
<dbReference type="Pfam" id="PF01091">
    <property type="entry name" value="PTN_MK_C"/>
    <property type="match status" value="1"/>
</dbReference>
<dbReference type="Pfam" id="PF05196">
    <property type="entry name" value="PTN_MK_N"/>
    <property type="match status" value="1"/>
</dbReference>
<dbReference type="PRINTS" id="PR00269">
    <property type="entry name" value="PTNMIDKINE"/>
</dbReference>
<dbReference type="SMART" id="SM00193">
    <property type="entry name" value="PTN"/>
    <property type="match status" value="1"/>
</dbReference>
<dbReference type="SUPFAM" id="SSF57288">
    <property type="entry name" value="Midkine"/>
    <property type="match status" value="2"/>
</dbReference>
<dbReference type="PROSITE" id="PS00619">
    <property type="entry name" value="PTN_MK_1"/>
    <property type="match status" value="1"/>
</dbReference>
<dbReference type="PROSITE" id="PS00620">
    <property type="entry name" value="PTN_MK_2"/>
    <property type="match status" value="1"/>
</dbReference>
<gene>
    <name type="primary">RIHB</name>
</gene>
<sequence length="142" mass="15579">MQPRGLLLLLALLLLAAAAEAAKAKKEKMKKEGSECQDWHWGPCIPNSKDCGLGYREGSCGDESRKLKCKIPCNWKKKFGADCKYKFESWGGCSAKTGVKTRSGILKKALYNAECEEVVYVSKPCTAKMKAKAKAKKGKGKD</sequence>
<name>MK_CHICK</name>
<accession>P24052</accession>
<feature type="signal peptide" evidence="2 3">
    <location>
        <begin position="1"/>
        <end position="21"/>
    </location>
</feature>
<feature type="chain" id="PRO_0000024665" description="Midkine">
    <location>
        <begin position="22"/>
        <end position="142"/>
    </location>
</feature>
<feature type="disulfide bond" evidence="1">
    <location>
        <begin position="36"/>
        <end position="60"/>
    </location>
</feature>
<feature type="disulfide bond" evidence="1">
    <location>
        <begin position="44"/>
        <end position="69"/>
    </location>
</feature>
<feature type="disulfide bond" evidence="1">
    <location>
        <begin position="51"/>
        <end position="73"/>
    </location>
</feature>
<feature type="disulfide bond" evidence="1">
    <location>
        <begin position="83"/>
        <end position="115"/>
    </location>
</feature>
<feature type="disulfide bond" evidence="1">
    <location>
        <begin position="93"/>
        <end position="125"/>
    </location>
</feature>
<feature type="sequence conflict" description="In Ref. 2; CAA54020." evidence="4" ref="2">
    <original>S</original>
    <variation>R</variation>
    <location>
        <position position="89"/>
    </location>
</feature>
<feature type="sequence conflict" description="In Ref. 2; CAA54020." evidence="4" ref="2">
    <original>C</original>
    <variation>G</variation>
    <location>
        <position position="93"/>
    </location>
</feature>
<protein>
    <recommendedName>
        <fullName>Midkine</fullName>
    </recommendedName>
    <alternativeName>
        <fullName>Retinoic acid-induced heparin-binding protein</fullName>
        <shortName>RI-HB</shortName>
    </alternativeName>
</protein>
<reference key="1">
    <citation type="journal article" date="1991" name="Biochem. Biophys. Res. Commun.">
        <title>Molecular cloning of RI-HB, a heparin binding protein regulated by retinoic acid.</title>
        <authorList>
            <person name="Urios P."/>
            <person name="Duprez D."/>
            <person name="le Caer J.-P."/>
            <person name="Courtois Y."/>
            <person name="Vigny M."/>
            <person name="Laurent M."/>
        </authorList>
    </citation>
    <scope>NUCLEOTIDE SEQUENCE [MRNA]</scope>
    <scope>PROTEIN SEQUENCE OF 80-85; 112-118 AND 121-133</scope>
    <source>
        <tissue>Embryo</tissue>
    </source>
</reference>
<reference key="2">
    <citation type="journal article" date="1994" name="Eur. J. Biochem.">
        <title>Organisation and promoter activity of the retinoic-acid-induced-heparin-binding (RIHB) gene.</title>
        <authorList>
            <person name="Duprez D."/>
            <person name="Treagger J."/>
            <person name="Pecqueur C."/>
            <person name="Vigny M.R."/>
        </authorList>
    </citation>
    <scope>NUCLEOTIDE SEQUENCE [GENOMIC DNA]</scope>
</reference>
<reference key="3">
    <citation type="journal article" date="1991" name="Biochem. Biophys. Res. Commun.">
        <title>A new heparin binding protein regulated by retinoic acid from chick embryo.</title>
        <authorList>
            <person name="Raulais D."/>
            <person name="Lagente-Chevallier O."/>
            <person name="Guettet C."/>
            <person name="Duprez D."/>
            <person name="Courtois Y."/>
            <person name="Vigny M."/>
        </authorList>
    </citation>
    <scope>PROTEIN SEQUENCE OF 22-77</scope>
</reference>
<reference key="4">
    <citation type="journal article" date="1989" name="Eur. J. Biochem.">
        <title>Identification of a new heparin-binding protein localized within chick basement membranes.</title>
        <authorList>
            <person name="Vigny M."/>
            <person name="Raulais D."/>
            <person name="Puzenat N."/>
            <person name="Duprez D."/>
            <person name="Hartman M.P."/>
            <person name="Jeanny J.C."/>
            <person name="Courtois Y."/>
        </authorList>
    </citation>
    <scope>PROTEIN SEQUENCE OF 22-77</scope>
    <source>
        <strain>White leghorn</strain>
        <tissue>Embryo</tissue>
    </source>
</reference>
<organism>
    <name type="scientific">Gallus gallus</name>
    <name type="common">Chicken</name>
    <dbReference type="NCBI Taxonomy" id="9031"/>
    <lineage>
        <taxon>Eukaryota</taxon>
        <taxon>Metazoa</taxon>
        <taxon>Chordata</taxon>
        <taxon>Craniata</taxon>
        <taxon>Vertebrata</taxon>
        <taxon>Euteleostomi</taxon>
        <taxon>Archelosauria</taxon>
        <taxon>Archosauria</taxon>
        <taxon>Dinosauria</taxon>
        <taxon>Saurischia</taxon>
        <taxon>Theropoda</taxon>
        <taxon>Coelurosauria</taxon>
        <taxon>Aves</taxon>
        <taxon>Neognathae</taxon>
        <taxon>Galloanserae</taxon>
        <taxon>Galliformes</taxon>
        <taxon>Phasianidae</taxon>
        <taxon>Phasianinae</taxon>
        <taxon>Gallus</taxon>
    </lineage>
</organism>
<comment type="function">
    <text>Has mitogenic activity, and neurite extension activity for PC12 cells.</text>
</comment>
<comment type="subcellular location">
    <subcellularLocation>
        <location>Cell surface</location>
    </subcellularLocation>
    <subcellularLocation>
        <location>Secreted</location>
        <location>Extracellular space</location>
        <location>Extracellular matrix</location>
        <location>Basement membrane</location>
    </subcellularLocation>
    <text>Basement membranes in early embryonic tissues, and cell surface of neuroectodermal cells.</text>
</comment>
<comment type="developmental stage">
    <text>Essentially expressed during embryogenesis.</text>
</comment>
<comment type="induction">
    <text>By retinoic acid.</text>
</comment>
<comment type="similarity">
    <text evidence="4">Belongs to the pleiotrophin family.</text>
</comment>
<keyword id="KW-0084">Basement membrane</keyword>
<keyword id="KW-0217">Developmental protein</keyword>
<keyword id="KW-0221">Differentiation</keyword>
<keyword id="KW-0903">Direct protein sequencing</keyword>
<keyword id="KW-1015">Disulfide bond</keyword>
<keyword id="KW-0272">Extracellular matrix</keyword>
<keyword id="KW-0339">Growth factor</keyword>
<keyword id="KW-0358">Heparin-binding</keyword>
<keyword id="KW-0497">Mitogen</keyword>
<keyword id="KW-1185">Reference proteome</keyword>
<keyword id="KW-0964">Secreted</keyword>
<keyword id="KW-0732">Signal</keyword>
<proteinExistence type="evidence at protein level"/>